<feature type="chain" id="PRO_0000356406" description="Large ribosomal subunit protein bL33">
    <location>
        <begin position="1"/>
        <end position="55"/>
    </location>
</feature>
<keyword id="KW-1185">Reference proteome</keyword>
<keyword id="KW-0687">Ribonucleoprotein</keyword>
<keyword id="KW-0689">Ribosomal protein</keyword>
<name>RL33_BRASB</name>
<dbReference type="EMBL" id="CP000494">
    <property type="protein sequence ID" value="ABQ36764.1"/>
    <property type="molecule type" value="Genomic_DNA"/>
</dbReference>
<dbReference type="RefSeq" id="WP_008960778.1">
    <property type="nucleotide sequence ID" value="NC_009485.1"/>
</dbReference>
<dbReference type="SMR" id="A5EKS0"/>
<dbReference type="STRING" id="288000.BBta_4738"/>
<dbReference type="KEGG" id="bbt:BBta_4738"/>
<dbReference type="eggNOG" id="COG0267">
    <property type="taxonomic scope" value="Bacteria"/>
</dbReference>
<dbReference type="HOGENOM" id="CLU_190949_1_1_5"/>
<dbReference type="OrthoDB" id="21586at2"/>
<dbReference type="Proteomes" id="UP000000246">
    <property type="component" value="Chromosome"/>
</dbReference>
<dbReference type="GO" id="GO:0022625">
    <property type="term" value="C:cytosolic large ribosomal subunit"/>
    <property type="evidence" value="ECO:0007669"/>
    <property type="project" value="TreeGrafter"/>
</dbReference>
<dbReference type="GO" id="GO:0003735">
    <property type="term" value="F:structural constituent of ribosome"/>
    <property type="evidence" value="ECO:0007669"/>
    <property type="project" value="InterPro"/>
</dbReference>
<dbReference type="GO" id="GO:0006412">
    <property type="term" value="P:translation"/>
    <property type="evidence" value="ECO:0007669"/>
    <property type="project" value="UniProtKB-UniRule"/>
</dbReference>
<dbReference type="FunFam" id="2.20.28.120:FF:000003">
    <property type="entry name" value="50S ribosomal protein L33"/>
    <property type="match status" value="1"/>
</dbReference>
<dbReference type="Gene3D" id="2.20.28.120">
    <property type="entry name" value="Ribosomal protein L33"/>
    <property type="match status" value="1"/>
</dbReference>
<dbReference type="HAMAP" id="MF_00294">
    <property type="entry name" value="Ribosomal_bL33"/>
    <property type="match status" value="1"/>
</dbReference>
<dbReference type="InterPro" id="IPR001705">
    <property type="entry name" value="Ribosomal_bL33"/>
</dbReference>
<dbReference type="InterPro" id="IPR038584">
    <property type="entry name" value="Ribosomal_bL33_sf"/>
</dbReference>
<dbReference type="InterPro" id="IPR011332">
    <property type="entry name" value="Ribosomal_zn-bd"/>
</dbReference>
<dbReference type="NCBIfam" id="NF001860">
    <property type="entry name" value="PRK00595.1"/>
    <property type="match status" value="1"/>
</dbReference>
<dbReference type="NCBIfam" id="TIGR01023">
    <property type="entry name" value="rpmG_bact"/>
    <property type="match status" value="1"/>
</dbReference>
<dbReference type="PANTHER" id="PTHR15238">
    <property type="entry name" value="54S RIBOSOMAL PROTEIN L39, MITOCHONDRIAL"/>
    <property type="match status" value="1"/>
</dbReference>
<dbReference type="PANTHER" id="PTHR15238:SF1">
    <property type="entry name" value="LARGE RIBOSOMAL SUBUNIT PROTEIN BL33M"/>
    <property type="match status" value="1"/>
</dbReference>
<dbReference type="Pfam" id="PF00471">
    <property type="entry name" value="Ribosomal_L33"/>
    <property type="match status" value="1"/>
</dbReference>
<dbReference type="SUPFAM" id="SSF57829">
    <property type="entry name" value="Zn-binding ribosomal proteins"/>
    <property type="match status" value="1"/>
</dbReference>
<protein>
    <recommendedName>
        <fullName evidence="1">Large ribosomal subunit protein bL33</fullName>
    </recommendedName>
    <alternativeName>
        <fullName evidence="2">50S ribosomal protein L33</fullName>
    </alternativeName>
</protein>
<accession>A5EKS0</accession>
<evidence type="ECO:0000255" key="1">
    <source>
        <dbReference type="HAMAP-Rule" id="MF_00294"/>
    </source>
</evidence>
<evidence type="ECO:0000305" key="2"/>
<comment type="similarity">
    <text evidence="1">Belongs to the bacterial ribosomal protein bL33 family.</text>
</comment>
<organism>
    <name type="scientific">Bradyrhizobium sp. (strain BTAi1 / ATCC BAA-1182)</name>
    <dbReference type="NCBI Taxonomy" id="288000"/>
    <lineage>
        <taxon>Bacteria</taxon>
        <taxon>Pseudomonadati</taxon>
        <taxon>Pseudomonadota</taxon>
        <taxon>Alphaproteobacteria</taxon>
        <taxon>Hyphomicrobiales</taxon>
        <taxon>Nitrobacteraceae</taxon>
        <taxon>Bradyrhizobium</taxon>
    </lineage>
</organism>
<gene>
    <name evidence="1" type="primary">rpmG</name>
    <name type="ordered locus">BBta_4738</name>
</gene>
<sequence length="55" mass="6351">MAKAVTIKVKLVSSADTGFYYVAKKNSRTMTEKMVKKKYDPVARKHVEFREAKIK</sequence>
<reference key="1">
    <citation type="journal article" date="2007" name="Science">
        <title>Legumes symbioses: absence of nod genes in photosynthetic bradyrhizobia.</title>
        <authorList>
            <person name="Giraud E."/>
            <person name="Moulin L."/>
            <person name="Vallenet D."/>
            <person name="Barbe V."/>
            <person name="Cytryn E."/>
            <person name="Avarre J.-C."/>
            <person name="Jaubert M."/>
            <person name="Simon D."/>
            <person name="Cartieaux F."/>
            <person name="Prin Y."/>
            <person name="Bena G."/>
            <person name="Hannibal L."/>
            <person name="Fardoux J."/>
            <person name="Kojadinovic M."/>
            <person name="Vuillet L."/>
            <person name="Lajus A."/>
            <person name="Cruveiller S."/>
            <person name="Rouy Z."/>
            <person name="Mangenot S."/>
            <person name="Segurens B."/>
            <person name="Dossat C."/>
            <person name="Franck W.L."/>
            <person name="Chang W.-S."/>
            <person name="Saunders E."/>
            <person name="Bruce D."/>
            <person name="Richardson P."/>
            <person name="Normand P."/>
            <person name="Dreyfus B."/>
            <person name="Pignol D."/>
            <person name="Stacey G."/>
            <person name="Emerich D."/>
            <person name="Vermeglio A."/>
            <person name="Medigue C."/>
            <person name="Sadowsky M."/>
        </authorList>
    </citation>
    <scope>NUCLEOTIDE SEQUENCE [LARGE SCALE GENOMIC DNA]</scope>
    <source>
        <strain>BTAi1 / ATCC BAA-1182</strain>
    </source>
</reference>
<proteinExistence type="inferred from homology"/>